<organism>
    <name type="scientific">Azorhizobium caulinodans (strain ATCC 43989 / DSM 5975 / JCM 20966 / LMG 6465 / NBRC 14845 / NCIMB 13405 / ORS 571)</name>
    <dbReference type="NCBI Taxonomy" id="438753"/>
    <lineage>
        <taxon>Bacteria</taxon>
        <taxon>Pseudomonadati</taxon>
        <taxon>Pseudomonadota</taxon>
        <taxon>Alphaproteobacteria</taxon>
        <taxon>Hyphomicrobiales</taxon>
        <taxon>Xanthobacteraceae</taxon>
        <taxon>Azorhizobium</taxon>
    </lineage>
</organism>
<accession>A8HTX8</accession>
<reference key="1">
    <citation type="submission" date="2007-04" db="EMBL/GenBank/DDBJ databases">
        <title>Complete genome sequence of the nitrogen-fixing bacterium Azorhizobium caulinodans ORS571.</title>
        <authorList>
            <person name="Lee K.B."/>
            <person name="Backer P.D."/>
            <person name="Aono T."/>
            <person name="Liu C.T."/>
            <person name="Suzuki S."/>
            <person name="Suzuki T."/>
            <person name="Kaneko T."/>
            <person name="Yamada M."/>
            <person name="Tabata S."/>
            <person name="Kupfer D.M."/>
            <person name="Najar F.Z."/>
            <person name="Wiley G.B."/>
            <person name="Roe B."/>
            <person name="Binnewies T."/>
            <person name="Ussery D."/>
            <person name="Vereecke D."/>
            <person name="Gevers D."/>
            <person name="Holsters M."/>
            <person name="Oyaizu H."/>
        </authorList>
    </citation>
    <scope>NUCLEOTIDE SEQUENCE [LARGE SCALE GENOMIC DNA]</scope>
    <source>
        <strain>ATCC 43989 / DSM 5975 / JCM 20966 / LMG 6465 / NBRC 14845 / NCIMB 13405 / ORS 571</strain>
    </source>
</reference>
<evidence type="ECO:0000255" key="1">
    <source>
        <dbReference type="HAMAP-Rule" id="MF_01318"/>
    </source>
</evidence>
<evidence type="ECO:0000305" key="2"/>
<protein>
    <recommendedName>
        <fullName evidence="1">Large ribosomal subunit protein uL1</fullName>
    </recommendedName>
    <alternativeName>
        <fullName evidence="2">50S ribosomal protein L1</fullName>
    </alternativeName>
</protein>
<sequence length="232" mass="24076">MAHQGKRVRAANEGIDRLKLYPLDEALALLKARTTAKFDETIEVAINLGVDPRHADQMVRGVCNLPNGSGRTVRVAVFARGAKADEAKAAGADIVGAEDLLETIQGGTIEFDRCIATPDLMPLVGRLGKVLGPRGLMPNPKVGTVTMDVKGAVAAAKGGAVEFRVEKAGIIHGGIGKASFPADKLAENIRAFVDAVVKAKPTGAKGTYVQRVAVSSTMGPGIKVDTASVVTA</sequence>
<comment type="function">
    <text evidence="1">Binds directly to 23S rRNA. The L1 stalk is quite mobile in the ribosome, and is involved in E site tRNA release.</text>
</comment>
<comment type="function">
    <text evidence="1">Protein L1 is also a translational repressor protein, it controls the translation of the L11 operon by binding to its mRNA.</text>
</comment>
<comment type="subunit">
    <text evidence="1">Part of the 50S ribosomal subunit.</text>
</comment>
<comment type="similarity">
    <text evidence="1">Belongs to the universal ribosomal protein uL1 family.</text>
</comment>
<keyword id="KW-1185">Reference proteome</keyword>
<keyword id="KW-0678">Repressor</keyword>
<keyword id="KW-0687">Ribonucleoprotein</keyword>
<keyword id="KW-0689">Ribosomal protein</keyword>
<keyword id="KW-0694">RNA-binding</keyword>
<keyword id="KW-0699">rRNA-binding</keyword>
<keyword id="KW-0810">Translation regulation</keyword>
<keyword id="KW-0820">tRNA-binding</keyword>
<gene>
    <name evidence="1" type="primary">rplA</name>
    <name type="ordered locus">AZC_0884</name>
</gene>
<dbReference type="EMBL" id="AP009384">
    <property type="protein sequence ID" value="BAF86882.1"/>
    <property type="molecule type" value="Genomic_DNA"/>
</dbReference>
<dbReference type="RefSeq" id="WP_012169415.1">
    <property type="nucleotide sequence ID" value="NC_009937.1"/>
</dbReference>
<dbReference type="SMR" id="A8HTX8"/>
<dbReference type="STRING" id="438753.AZC_0884"/>
<dbReference type="KEGG" id="azc:AZC_0884"/>
<dbReference type="eggNOG" id="COG0081">
    <property type="taxonomic scope" value="Bacteria"/>
</dbReference>
<dbReference type="HOGENOM" id="CLU_062853_0_0_5"/>
<dbReference type="Proteomes" id="UP000000270">
    <property type="component" value="Chromosome"/>
</dbReference>
<dbReference type="GO" id="GO:0022625">
    <property type="term" value="C:cytosolic large ribosomal subunit"/>
    <property type="evidence" value="ECO:0007669"/>
    <property type="project" value="TreeGrafter"/>
</dbReference>
<dbReference type="GO" id="GO:0019843">
    <property type="term" value="F:rRNA binding"/>
    <property type="evidence" value="ECO:0007669"/>
    <property type="project" value="UniProtKB-UniRule"/>
</dbReference>
<dbReference type="GO" id="GO:0003735">
    <property type="term" value="F:structural constituent of ribosome"/>
    <property type="evidence" value="ECO:0007669"/>
    <property type="project" value="InterPro"/>
</dbReference>
<dbReference type="GO" id="GO:0000049">
    <property type="term" value="F:tRNA binding"/>
    <property type="evidence" value="ECO:0007669"/>
    <property type="project" value="UniProtKB-KW"/>
</dbReference>
<dbReference type="GO" id="GO:0006417">
    <property type="term" value="P:regulation of translation"/>
    <property type="evidence" value="ECO:0007669"/>
    <property type="project" value="UniProtKB-KW"/>
</dbReference>
<dbReference type="GO" id="GO:0006412">
    <property type="term" value="P:translation"/>
    <property type="evidence" value="ECO:0007669"/>
    <property type="project" value="UniProtKB-UniRule"/>
</dbReference>
<dbReference type="CDD" id="cd00403">
    <property type="entry name" value="Ribosomal_L1"/>
    <property type="match status" value="1"/>
</dbReference>
<dbReference type="FunFam" id="3.40.50.790:FF:000001">
    <property type="entry name" value="50S ribosomal protein L1"/>
    <property type="match status" value="1"/>
</dbReference>
<dbReference type="Gene3D" id="3.30.190.20">
    <property type="match status" value="1"/>
</dbReference>
<dbReference type="Gene3D" id="3.40.50.790">
    <property type="match status" value="1"/>
</dbReference>
<dbReference type="HAMAP" id="MF_01318_B">
    <property type="entry name" value="Ribosomal_uL1_B"/>
    <property type="match status" value="1"/>
</dbReference>
<dbReference type="InterPro" id="IPR005878">
    <property type="entry name" value="Ribosom_uL1_bac-type"/>
</dbReference>
<dbReference type="InterPro" id="IPR002143">
    <property type="entry name" value="Ribosomal_uL1"/>
</dbReference>
<dbReference type="InterPro" id="IPR023674">
    <property type="entry name" value="Ribosomal_uL1-like"/>
</dbReference>
<dbReference type="InterPro" id="IPR028364">
    <property type="entry name" value="Ribosomal_uL1/biogenesis"/>
</dbReference>
<dbReference type="InterPro" id="IPR016095">
    <property type="entry name" value="Ribosomal_uL1_3-a/b-sand"/>
</dbReference>
<dbReference type="InterPro" id="IPR023673">
    <property type="entry name" value="Ribosomal_uL1_CS"/>
</dbReference>
<dbReference type="NCBIfam" id="TIGR01169">
    <property type="entry name" value="rplA_bact"/>
    <property type="match status" value="1"/>
</dbReference>
<dbReference type="PANTHER" id="PTHR36427">
    <property type="entry name" value="54S RIBOSOMAL PROTEIN L1, MITOCHONDRIAL"/>
    <property type="match status" value="1"/>
</dbReference>
<dbReference type="PANTHER" id="PTHR36427:SF3">
    <property type="entry name" value="LARGE RIBOSOMAL SUBUNIT PROTEIN UL1M"/>
    <property type="match status" value="1"/>
</dbReference>
<dbReference type="Pfam" id="PF00687">
    <property type="entry name" value="Ribosomal_L1"/>
    <property type="match status" value="1"/>
</dbReference>
<dbReference type="PIRSF" id="PIRSF002155">
    <property type="entry name" value="Ribosomal_L1"/>
    <property type="match status" value="1"/>
</dbReference>
<dbReference type="SUPFAM" id="SSF56808">
    <property type="entry name" value="Ribosomal protein L1"/>
    <property type="match status" value="1"/>
</dbReference>
<dbReference type="PROSITE" id="PS01199">
    <property type="entry name" value="RIBOSOMAL_L1"/>
    <property type="match status" value="1"/>
</dbReference>
<name>RL1_AZOC5</name>
<proteinExistence type="inferred from homology"/>
<feature type="chain" id="PRO_1000073216" description="Large ribosomal subunit protein uL1">
    <location>
        <begin position="1"/>
        <end position="232"/>
    </location>
</feature>